<evidence type="ECO:0000256" key="1">
    <source>
        <dbReference type="SAM" id="MobiDB-lite"/>
    </source>
</evidence>
<evidence type="ECO:0000269" key="2">
    <source>
    </source>
</evidence>
<name>YNS5_SCHPO</name>
<feature type="chain" id="PRO_0000316568" description="Uncharacterized WD repeat-containing protein C18H10.05">
    <location>
        <begin position="1"/>
        <end position="586"/>
    </location>
</feature>
<feature type="repeat" description="WD 1">
    <location>
        <begin position="184"/>
        <end position="223"/>
    </location>
</feature>
<feature type="repeat" description="WD 2">
    <location>
        <begin position="253"/>
        <end position="291"/>
    </location>
</feature>
<feature type="repeat" description="WD 3">
    <location>
        <begin position="293"/>
        <end position="333"/>
    </location>
</feature>
<feature type="repeat" description="WD 4">
    <location>
        <begin position="335"/>
        <end position="374"/>
    </location>
</feature>
<feature type="repeat" description="WD 5">
    <location>
        <begin position="387"/>
        <end position="430"/>
    </location>
</feature>
<feature type="repeat" description="WD 6">
    <location>
        <begin position="432"/>
        <end position="474"/>
    </location>
</feature>
<feature type="region of interest" description="Disordered" evidence="1">
    <location>
        <begin position="1"/>
        <end position="115"/>
    </location>
</feature>
<feature type="compositionally biased region" description="Basic and acidic residues" evidence="1">
    <location>
        <begin position="8"/>
        <end position="20"/>
    </location>
</feature>
<feature type="compositionally biased region" description="Polar residues" evidence="1">
    <location>
        <begin position="21"/>
        <end position="31"/>
    </location>
</feature>
<feature type="compositionally biased region" description="Basic and acidic residues" evidence="1">
    <location>
        <begin position="35"/>
        <end position="44"/>
    </location>
</feature>
<feature type="compositionally biased region" description="Polar residues" evidence="1">
    <location>
        <begin position="76"/>
        <end position="107"/>
    </location>
</feature>
<comment type="subcellular location">
    <subcellularLocation>
        <location evidence="2">Cytoplasm</location>
    </subcellularLocation>
    <subcellularLocation>
        <location evidence="2">Nucleus</location>
    </subcellularLocation>
    <text>Localizes at the cell tip and the barrier septum.</text>
</comment>
<proteinExistence type="predicted"/>
<sequence>MRVLVAETGREDNVSVHSREVSVNGSDSGTGNDAYKLETDDEHPPATPVRGLSTRSQKRPFRPLTIQQDEDVENDTGMNTEYNDDNSSLVNTPRDSTTYAETNSPNTEKLAGRDDDRSLLNLIDRGEIDSKRQRHYVPVHCKRMPKKEITLNQKLYVSQVIGPADAPKSKTIFGKRIMQWEPSQFKESVWASEISKSGKYLATAGKDAIIRVWKVIETPERRETLLKEGPQSCGRFFTPSSIFEPEPVLECVGHNAEVLSISWSKNDFLLTSSADRTVRLWHPKSTKSLAVFRHNEIVTCVAFHPIDDRYFVSGSLDCKIQLWSILRHKILHWTELEYVVSTICFYPDGESIVVGMFYGLCAIYETKNLQYVSSWLIHHSPSRNKKCRVTGLQCASIIPNDSKSDNVVLVSTNDNAIRLYNTVTHALVLKLSDAHRVNGRVLSRLSEDNSYIISGSDTNEVVLWHIPNKVLINASRKRSVILHLPTETFKVCSERLTSTIIAPARTAVEAKESEHDRSLIAEGYNLVKPHSHRSYGTPPVHPIDIIIATNMAGMTIVLCVDYDLGNSHHGFRNSKFGHFVKRLLRT</sequence>
<gene>
    <name type="ORF">SPBC18H10.05</name>
</gene>
<reference key="1">
    <citation type="journal article" date="2002" name="Nature">
        <title>The genome sequence of Schizosaccharomyces pombe.</title>
        <authorList>
            <person name="Wood V."/>
            <person name="Gwilliam R."/>
            <person name="Rajandream M.A."/>
            <person name="Lyne M.H."/>
            <person name="Lyne R."/>
            <person name="Stewart A."/>
            <person name="Sgouros J.G."/>
            <person name="Peat N."/>
            <person name="Hayles J."/>
            <person name="Baker S.G."/>
            <person name="Basham D."/>
            <person name="Bowman S."/>
            <person name="Brooks K."/>
            <person name="Brown D."/>
            <person name="Brown S."/>
            <person name="Chillingworth T."/>
            <person name="Churcher C.M."/>
            <person name="Collins M."/>
            <person name="Connor R."/>
            <person name="Cronin A."/>
            <person name="Davis P."/>
            <person name="Feltwell T."/>
            <person name="Fraser A."/>
            <person name="Gentles S."/>
            <person name="Goble A."/>
            <person name="Hamlin N."/>
            <person name="Harris D.E."/>
            <person name="Hidalgo J."/>
            <person name="Hodgson G."/>
            <person name="Holroyd S."/>
            <person name="Hornsby T."/>
            <person name="Howarth S."/>
            <person name="Huckle E.J."/>
            <person name="Hunt S."/>
            <person name="Jagels K."/>
            <person name="James K.D."/>
            <person name="Jones L."/>
            <person name="Jones M."/>
            <person name="Leather S."/>
            <person name="McDonald S."/>
            <person name="McLean J."/>
            <person name="Mooney P."/>
            <person name="Moule S."/>
            <person name="Mungall K.L."/>
            <person name="Murphy L.D."/>
            <person name="Niblett D."/>
            <person name="Odell C."/>
            <person name="Oliver K."/>
            <person name="O'Neil S."/>
            <person name="Pearson D."/>
            <person name="Quail M.A."/>
            <person name="Rabbinowitsch E."/>
            <person name="Rutherford K.M."/>
            <person name="Rutter S."/>
            <person name="Saunders D."/>
            <person name="Seeger K."/>
            <person name="Sharp S."/>
            <person name="Skelton J."/>
            <person name="Simmonds M.N."/>
            <person name="Squares R."/>
            <person name="Squares S."/>
            <person name="Stevens K."/>
            <person name="Taylor K."/>
            <person name="Taylor R.G."/>
            <person name="Tivey A."/>
            <person name="Walsh S.V."/>
            <person name="Warren T."/>
            <person name="Whitehead S."/>
            <person name="Woodward J.R."/>
            <person name="Volckaert G."/>
            <person name="Aert R."/>
            <person name="Robben J."/>
            <person name="Grymonprez B."/>
            <person name="Weltjens I."/>
            <person name="Vanstreels E."/>
            <person name="Rieger M."/>
            <person name="Schaefer M."/>
            <person name="Mueller-Auer S."/>
            <person name="Gabel C."/>
            <person name="Fuchs M."/>
            <person name="Duesterhoeft A."/>
            <person name="Fritzc C."/>
            <person name="Holzer E."/>
            <person name="Moestl D."/>
            <person name="Hilbert H."/>
            <person name="Borzym K."/>
            <person name="Langer I."/>
            <person name="Beck A."/>
            <person name="Lehrach H."/>
            <person name="Reinhardt R."/>
            <person name="Pohl T.M."/>
            <person name="Eger P."/>
            <person name="Zimmermann W."/>
            <person name="Wedler H."/>
            <person name="Wambutt R."/>
            <person name="Purnelle B."/>
            <person name="Goffeau A."/>
            <person name="Cadieu E."/>
            <person name="Dreano S."/>
            <person name="Gloux S."/>
            <person name="Lelaure V."/>
            <person name="Mottier S."/>
            <person name="Galibert F."/>
            <person name="Aves S.J."/>
            <person name="Xiang Z."/>
            <person name="Hunt C."/>
            <person name="Moore K."/>
            <person name="Hurst S.M."/>
            <person name="Lucas M."/>
            <person name="Rochet M."/>
            <person name="Gaillardin C."/>
            <person name="Tallada V.A."/>
            <person name="Garzon A."/>
            <person name="Thode G."/>
            <person name="Daga R.R."/>
            <person name="Cruzado L."/>
            <person name="Jimenez J."/>
            <person name="Sanchez M."/>
            <person name="del Rey F."/>
            <person name="Benito J."/>
            <person name="Dominguez A."/>
            <person name="Revuelta J.L."/>
            <person name="Moreno S."/>
            <person name="Armstrong J."/>
            <person name="Forsburg S.L."/>
            <person name="Cerutti L."/>
            <person name="Lowe T."/>
            <person name="McCombie W.R."/>
            <person name="Paulsen I."/>
            <person name="Potashkin J."/>
            <person name="Shpakovski G.V."/>
            <person name="Ussery D."/>
            <person name="Barrell B.G."/>
            <person name="Nurse P."/>
        </authorList>
    </citation>
    <scope>NUCLEOTIDE SEQUENCE [LARGE SCALE GENOMIC DNA]</scope>
    <source>
        <strain>972 / ATCC 24843</strain>
    </source>
</reference>
<reference key="2">
    <citation type="journal article" date="2006" name="Nat. Biotechnol.">
        <title>ORFeome cloning and global analysis of protein localization in the fission yeast Schizosaccharomyces pombe.</title>
        <authorList>
            <person name="Matsuyama A."/>
            <person name="Arai R."/>
            <person name="Yashiroda Y."/>
            <person name="Shirai A."/>
            <person name="Kamata A."/>
            <person name="Sekido S."/>
            <person name="Kobayashi Y."/>
            <person name="Hashimoto A."/>
            <person name="Hamamoto M."/>
            <person name="Hiraoka Y."/>
            <person name="Horinouchi S."/>
            <person name="Yoshida M."/>
        </authorList>
    </citation>
    <scope>SUBCELLULAR LOCATION [LARGE SCALE ANALYSIS]</scope>
</reference>
<organism>
    <name type="scientific">Schizosaccharomyces pombe (strain 972 / ATCC 24843)</name>
    <name type="common">Fission yeast</name>
    <dbReference type="NCBI Taxonomy" id="284812"/>
    <lineage>
        <taxon>Eukaryota</taxon>
        <taxon>Fungi</taxon>
        <taxon>Dikarya</taxon>
        <taxon>Ascomycota</taxon>
        <taxon>Taphrinomycotina</taxon>
        <taxon>Schizosaccharomycetes</taxon>
        <taxon>Schizosaccharomycetales</taxon>
        <taxon>Schizosaccharomycetaceae</taxon>
        <taxon>Schizosaccharomyces</taxon>
    </lineage>
</organism>
<dbReference type="EMBL" id="CU329671">
    <property type="protein sequence ID" value="CAA18402.1"/>
    <property type="molecule type" value="Genomic_DNA"/>
</dbReference>
<dbReference type="PIR" id="T39769">
    <property type="entry name" value="T39769"/>
</dbReference>
<dbReference type="RefSeq" id="NP_595729.1">
    <property type="nucleotide sequence ID" value="NM_001021627.2"/>
</dbReference>
<dbReference type="SMR" id="O60136"/>
<dbReference type="BioGRID" id="277350">
    <property type="interactions" value="29"/>
</dbReference>
<dbReference type="FunCoup" id="O60136">
    <property type="interactions" value="10"/>
</dbReference>
<dbReference type="iPTMnet" id="O60136"/>
<dbReference type="PaxDb" id="4896-SPBC18H10.05.1"/>
<dbReference type="EnsemblFungi" id="SPBC18H10.05.1">
    <property type="protein sequence ID" value="SPBC18H10.05.1:pep"/>
    <property type="gene ID" value="SPBC18H10.05"/>
</dbReference>
<dbReference type="KEGG" id="spo:2540832"/>
<dbReference type="PomBase" id="SPBC18H10.05"/>
<dbReference type="VEuPathDB" id="FungiDB:SPBC18H10.05"/>
<dbReference type="eggNOG" id="KOG0283">
    <property type="taxonomic scope" value="Eukaryota"/>
</dbReference>
<dbReference type="HOGENOM" id="CLU_465518_0_0_1"/>
<dbReference type="InParanoid" id="O60136"/>
<dbReference type="OMA" id="FRICTER"/>
<dbReference type="PhylomeDB" id="O60136"/>
<dbReference type="PRO" id="PR:O60136"/>
<dbReference type="Proteomes" id="UP000002485">
    <property type="component" value="Chromosome II"/>
</dbReference>
<dbReference type="GO" id="GO:0032153">
    <property type="term" value="C:cell division site"/>
    <property type="evidence" value="ECO:0007005"/>
    <property type="project" value="PomBase"/>
</dbReference>
<dbReference type="GO" id="GO:0051286">
    <property type="term" value="C:cell tip"/>
    <property type="evidence" value="ECO:0007005"/>
    <property type="project" value="PomBase"/>
</dbReference>
<dbReference type="GO" id="GO:0005829">
    <property type="term" value="C:cytosol"/>
    <property type="evidence" value="ECO:0007005"/>
    <property type="project" value="PomBase"/>
</dbReference>
<dbReference type="GO" id="GO:0005794">
    <property type="term" value="C:Golgi apparatus"/>
    <property type="evidence" value="ECO:0000266"/>
    <property type="project" value="PomBase"/>
</dbReference>
<dbReference type="GO" id="GO:0005634">
    <property type="term" value="C:nucleus"/>
    <property type="evidence" value="ECO:0007005"/>
    <property type="project" value="PomBase"/>
</dbReference>
<dbReference type="GO" id="GO:0016192">
    <property type="term" value="P:vesicle-mediated transport"/>
    <property type="evidence" value="ECO:0000266"/>
    <property type="project" value="PomBase"/>
</dbReference>
<dbReference type="Gene3D" id="2.130.10.10">
    <property type="entry name" value="YVTN repeat-like/Quinoprotein amine dehydrogenase"/>
    <property type="match status" value="1"/>
</dbReference>
<dbReference type="InterPro" id="IPR020472">
    <property type="entry name" value="G-protein_beta_WD-40_rep"/>
</dbReference>
<dbReference type="InterPro" id="IPR015943">
    <property type="entry name" value="WD40/YVTN_repeat-like_dom_sf"/>
</dbReference>
<dbReference type="InterPro" id="IPR036322">
    <property type="entry name" value="WD40_repeat_dom_sf"/>
</dbReference>
<dbReference type="InterPro" id="IPR001680">
    <property type="entry name" value="WD40_rpt"/>
</dbReference>
<dbReference type="InterPro" id="IPR040324">
    <property type="entry name" value="WDR44/Dgr2"/>
</dbReference>
<dbReference type="PANTHER" id="PTHR14221">
    <property type="entry name" value="WD REPEAT DOMAIN 44"/>
    <property type="match status" value="1"/>
</dbReference>
<dbReference type="PANTHER" id="PTHR14221:SF65">
    <property type="entry name" value="WDR44 FAMILY WD REPEAT PROTEIN"/>
    <property type="match status" value="1"/>
</dbReference>
<dbReference type="Pfam" id="PF00400">
    <property type="entry name" value="WD40"/>
    <property type="match status" value="3"/>
</dbReference>
<dbReference type="PRINTS" id="PR00320">
    <property type="entry name" value="GPROTEINBRPT"/>
</dbReference>
<dbReference type="SMART" id="SM00320">
    <property type="entry name" value="WD40"/>
    <property type="match status" value="5"/>
</dbReference>
<dbReference type="SUPFAM" id="SSF50978">
    <property type="entry name" value="WD40 repeat-like"/>
    <property type="match status" value="1"/>
</dbReference>
<dbReference type="PROSITE" id="PS50082">
    <property type="entry name" value="WD_REPEATS_2"/>
    <property type="match status" value="2"/>
</dbReference>
<dbReference type="PROSITE" id="PS50294">
    <property type="entry name" value="WD_REPEATS_REGION"/>
    <property type="match status" value="1"/>
</dbReference>
<keyword id="KW-0963">Cytoplasm</keyword>
<keyword id="KW-0539">Nucleus</keyword>
<keyword id="KW-1185">Reference proteome</keyword>
<keyword id="KW-0677">Repeat</keyword>
<keyword id="KW-0853">WD repeat</keyword>
<accession>O60136</accession>
<protein>
    <recommendedName>
        <fullName>Uncharacterized WD repeat-containing protein C18H10.05</fullName>
    </recommendedName>
</protein>